<protein>
    <recommendedName>
        <fullName evidence="1">DNA-directed RNA polymerase subunit alpha</fullName>
        <shortName evidence="1">RNAP subunit alpha</shortName>
        <ecNumber evidence="1">2.7.7.6</ecNumber>
    </recommendedName>
    <alternativeName>
        <fullName evidence="1">RNA polymerase subunit alpha</fullName>
    </alternativeName>
    <alternativeName>
        <fullName evidence="1">Transcriptase subunit alpha</fullName>
    </alternativeName>
</protein>
<reference key="1">
    <citation type="journal article" date="2004" name="Proc. Natl. Acad. Sci. U.S.A.">
        <title>Genomic analysis of Bacteroides fragilis reveals extensive DNA inversions regulating cell surface adaptation.</title>
        <authorList>
            <person name="Kuwahara T."/>
            <person name="Yamashita A."/>
            <person name="Hirakawa H."/>
            <person name="Nakayama H."/>
            <person name="Toh H."/>
            <person name="Okada N."/>
            <person name="Kuhara S."/>
            <person name="Hattori M."/>
            <person name="Hayashi T."/>
            <person name="Ohnishi Y."/>
        </authorList>
    </citation>
    <scope>NUCLEOTIDE SEQUENCE [LARGE SCALE GENOMIC DNA]</scope>
    <source>
        <strain>YCH46</strain>
    </source>
</reference>
<keyword id="KW-0240">DNA-directed RNA polymerase</keyword>
<keyword id="KW-0548">Nucleotidyltransferase</keyword>
<keyword id="KW-0804">Transcription</keyword>
<keyword id="KW-0808">Transferase</keyword>
<feature type="chain" id="PRO_0000175261" description="DNA-directed RNA polymerase subunit alpha">
    <location>
        <begin position="1"/>
        <end position="330"/>
    </location>
</feature>
<feature type="region of interest" description="Alpha N-terminal domain (alpha-NTD)" evidence="1">
    <location>
        <begin position="1"/>
        <end position="232"/>
    </location>
</feature>
<feature type="region of interest" description="Alpha C-terminal domain (alpha-CTD)" evidence="1">
    <location>
        <begin position="248"/>
        <end position="330"/>
    </location>
</feature>
<organism>
    <name type="scientific">Bacteroides fragilis (strain YCH46)</name>
    <dbReference type="NCBI Taxonomy" id="295405"/>
    <lineage>
        <taxon>Bacteria</taxon>
        <taxon>Pseudomonadati</taxon>
        <taxon>Bacteroidota</taxon>
        <taxon>Bacteroidia</taxon>
        <taxon>Bacteroidales</taxon>
        <taxon>Bacteroidaceae</taxon>
        <taxon>Bacteroides</taxon>
    </lineage>
</organism>
<gene>
    <name evidence="1" type="primary">rpoA</name>
    <name type="ordered locus">BF4155</name>
</gene>
<comment type="function">
    <text evidence="1">DNA-dependent RNA polymerase catalyzes the transcription of DNA into RNA using the four ribonucleoside triphosphates as substrates.</text>
</comment>
<comment type="catalytic activity">
    <reaction evidence="1">
        <text>RNA(n) + a ribonucleoside 5'-triphosphate = RNA(n+1) + diphosphate</text>
        <dbReference type="Rhea" id="RHEA:21248"/>
        <dbReference type="Rhea" id="RHEA-COMP:14527"/>
        <dbReference type="Rhea" id="RHEA-COMP:17342"/>
        <dbReference type="ChEBI" id="CHEBI:33019"/>
        <dbReference type="ChEBI" id="CHEBI:61557"/>
        <dbReference type="ChEBI" id="CHEBI:140395"/>
        <dbReference type="EC" id="2.7.7.6"/>
    </reaction>
</comment>
<comment type="subunit">
    <text evidence="1">Homodimer. The RNAP catalytic core consists of 2 alpha, 1 beta, 1 beta' and 1 omega subunit. When a sigma factor is associated with the core the holoenzyme is formed, which can initiate transcription.</text>
</comment>
<comment type="domain">
    <text evidence="1">The N-terminal domain is essential for RNAP assembly and basal transcription, whereas the C-terminal domain is involved in interaction with transcriptional regulators and with upstream promoter elements.</text>
</comment>
<comment type="similarity">
    <text evidence="1">Belongs to the RNA polymerase alpha chain family.</text>
</comment>
<dbReference type="EC" id="2.7.7.6" evidence="1"/>
<dbReference type="EMBL" id="AP006841">
    <property type="protein sequence ID" value="BAD50897.1"/>
    <property type="molecule type" value="Genomic_DNA"/>
</dbReference>
<dbReference type="RefSeq" id="WP_005782229.1">
    <property type="nucleotide sequence ID" value="NZ_UYXF01000007.1"/>
</dbReference>
<dbReference type="RefSeq" id="YP_101431.1">
    <property type="nucleotide sequence ID" value="NC_006347.1"/>
</dbReference>
<dbReference type="SMR" id="Q64NN5"/>
<dbReference type="STRING" id="295405.BF4155"/>
<dbReference type="KEGG" id="bfr:BF4155"/>
<dbReference type="PATRIC" id="fig|295405.11.peg.4008"/>
<dbReference type="HOGENOM" id="CLU_053084_0_1_10"/>
<dbReference type="OrthoDB" id="9805706at2"/>
<dbReference type="Proteomes" id="UP000002197">
    <property type="component" value="Chromosome"/>
</dbReference>
<dbReference type="GO" id="GO:0005737">
    <property type="term" value="C:cytoplasm"/>
    <property type="evidence" value="ECO:0007669"/>
    <property type="project" value="UniProtKB-ARBA"/>
</dbReference>
<dbReference type="GO" id="GO:0000428">
    <property type="term" value="C:DNA-directed RNA polymerase complex"/>
    <property type="evidence" value="ECO:0007669"/>
    <property type="project" value="UniProtKB-KW"/>
</dbReference>
<dbReference type="GO" id="GO:0003677">
    <property type="term" value="F:DNA binding"/>
    <property type="evidence" value="ECO:0007669"/>
    <property type="project" value="UniProtKB-UniRule"/>
</dbReference>
<dbReference type="GO" id="GO:0003899">
    <property type="term" value="F:DNA-directed RNA polymerase activity"/>
    <property type="evidence" value="ECO:0007669"/>
    <property type="project" value="UniProtKB-UniRule"/>
</dbReference>
<dbReference type="GO" id="GO:0046983">
    <property type="term" value="F:protein dimerization activity"/>
    <property type="evidence" value="ECO:0007669"/>
    <property type="project" value="InterPro"/>
</dbReference>
<dbReference type="GO" id="GO:0006351">
    <property type="term" value="P:DNA-templated transcription"/>
    <property type="evidence" value="ECO:0007669"/>
    <property type="project" value="UniProtKB-UniRule"/>
</dbReference>
<dbReference type="CDD" id="cd06928">
    <property type="entry name" value="RNAP_alpha_NTD"/>
    <property type="match status" value="1"/>
</dbReference>
<dbReference type="FunFam" id="1.10.150.20:FF:000020">
    <property type="entry name" value="DNA-directed RNA polymerase subunit alpha"/>
    <property type="match status" value="1"/>
</dbReference>
<dbReference type="FunFam" id="2.170.120.12:FF:000001">
    <property type="entry name" value="DNA-directed RNA polymerase subunit alpha"/>
    <property type="match status" value="1"/>
</dbReference>
<dbReference type="Gene3D" id="1.10.150.20">
    <property type="entry name" value="5' to 3' exonuclease, C-terminal subdomain"/>
    <property type="match status" value="1"/>
</dbReference>
<dbReference type="Gene3D" id="2.170.120.12">
    <property type="entry name" value="DNA-directed RNA polymerase, insert domain"/>
    <property type="match status" value="1"/>
</dbReference>
<dbReference type="Gene3D" id="3.30.1360.10">
    <property type="entry name" value="RNA polymerase, RBP11-like subunit"/>
    <property type="match status" value="1"/>
</dbReference>
<dbReference type="HAMAP" id="MF_00059">
    <property type="entry name" value="RNApol_bact_RpoA"/>
    <property type="match status" value="1"/>
</dbReference>
<dbReference type="InterPro" id="IPR011262">
    <property type="entry name" value="DNA-dir_RNA_pol_insert"/>
</dbReference>
<dbReference type="InterPro" id="IPR011263">
    <property type="entry name" value="DNA-dir_RNA_pol_RpoA/D/Rpb3"/>
</dbReference>
<dbReference type="InterPro" id="IPR011773">
    <property type="entry name" value="DNA-dir_RpoA"/>
</dbReference>
<dbReference type="InterPro" id="IPR036603">
    <property type="entry name" value="RBP11-like"/>
</dbReference>
<dbReference type="InterPro" id="IPR011260">
    <property type="entry name" value="RNAP_asu_C"/>
</dbReference>
<dbReference type="InterPro" id="IPR036643">
    <property type="entry name" value="RNApol_insert_sf"/>
</dbReference>
<dbReference type="NCBIfam" id="NF003513">
    <property type="entry name" value="PRK05182.1-2"/>
    <property type="match status" value="1"/>
</dbReference>
<dbReference type="NCBIfam" id="NF003516">
    <property type="entry name" value="PRK05182.2-2"/>
    <property type="match status" value="1"/>
</dbReference>
<dbReference type="NCBIfam" id="NF003519">
    <property type="entry name" value="PRK05182.2-5"/>
    <property type="match status" value="1"/>
</dbReference>
<dbReference type="NCBIfam" id="TIGR02027">
    <property type="entry name" value="rpoA"/>
    <property type="match status" value="1"/>
</dbReference>
<dbReference type="Pfam" id="PF01000">
    <property type="entry name" value="RNA_pol_A_bac"/>
    <property type="match status" value="1"/>
</dbReference>
<dbReference type="Pfam" id="PF03118">
    <property type="entry name" value="RNA_pol_A_CTD"/>
    <property type="match status" value="1"/>
</dbReference>
<dbReference type="Pfam" id="PF01193">
    <property type="entry name" value="RNA_pol_L"/>
    <property type="match status" value="1"/>
</dbReference>
<dbReference type="SMART" id="SM00662">
    <property type="entry name" value="RPOLD"/>
    <property type="match status" value="1"/>
</dbReference>
<dbReference type="SUPFAM" id="SSF47789">
    <property type="entry name" value="C-terminal domain of RNA polymerase alpha subunit"/>
    <property type="match status" value="1"/>
</dbReference>
<dbReference type="SUPFAM" id="SSF56553">
    <property type="entry name" value="Insert subdomain of RNA polymerase alpha subunit"/>
    <property type="match status" value="1"/>
</dbReference>
<dbReference type="SUPFAM" id="SSF55257">
    <property type="entry name" value="RBP11-like subunits of RNA polymerase"/>
    <property type="match status" value="1"/>
</dbReference>
<name>RPOA_BACFR</name>
<proteinExistence type="inferred from homology"/>
<evidence type="ECO:0000255" key="1">
    <source>
        <dbReference type="HAMAP-Rule" id="MF_00059"/>
    </source>
</evidence>
<accession>Q64NN5</accession>
<sequence>MAILAFQKPDKVLMLEADAKFGKFEFRPLEPGFGITVGNALRRILLSSLEGFAITTIRIEGVEHEFSSVPGVKEDVTNIILNLKQVRFKQVVEEFESEKVSITIENSSEFKAGDIGKYLTGFEVLNPELVICHLDSKATMQIDITINKGRGYVPADENREYCTDVNVIPIDSIYTPIRNVKYAVENFRVEQKTDYEKLVLEITTDGSIHPKEALKEAAKILIYHFMLFSDEKITLESNDVDGNEEFDEEVLHMRQLLKTKLVDMDLSVRALNCLKAADVETLGDLVQFNKTDLLKFRNFGKKSLTELDDLLESLNLSFGTDISKYKLDKE</sequence>